<reference key="1">
    <citation type="journal article" date="2006" name="PLoS Biol.">
        <title>Metabolic complementarity and genomics of the dual bacterial symbiosis of sharpshooters.</title>
        <authorList>
            <person name="Wu D."/>
            <person name="Daugherty S.C."/>
            <person name="Van Aken S.E."/>
            <person name="Pai G.H."/>
            <person name="Watkins K.L."/>
            <person name="Khouri H."/>
            <person name="Tallon L.J."/>
            <person name="Zaborsky J.M."/>
            <person name="Dunbar H.E."/>
            <person name="Tran P.L."/>
            <person name="Moran N.A."/>
            <person name="Eisen J.A."/>
        </authorList>
    </citation>
    <scope>NUCLEOTIDE SEQUENCE [LARGE SCALE GENOMIC DNA]</scope>
</reference>
<evidence type="ECO:0000255" key="1">
    <source>
        <dbReference type="HAMAP-Rule" id="MF_00501"/>
    </source>
</evidence>
<evidence type="ECO:0000305" key="2"/>
<keyword id="KW-0479">Metal-binding</keyword>
<keyword id="KW-1185">Reference proteome</keyword>
<keyword id="KW-0687">Ribonucleoprotein</keyword>
<keyword id="KW-0689">Ribosomal protein</keyword>
<keyword id="KW-0694">RNA-binding</keyword>
<keyword id="KW-0699">rRNA-binding</keyword>
<keyword id="KW-0862">Zinc</keyword>
<accession>Q1LTT8</accession>
<comment type="function">
    <text evidence="1">Binds the 23S rRNA.</text>
</comment>
<comment type="cofactor">
    <cofactor evidence="1">
        <name>Zn(2+)</name>
        <dbReference type="ChEBI" id="CHEBI:29105"/>
    </cofactor>
    <text evidence="1">Binds 1 zinc ion per subunit.</text>
</comment>
<comment type="subunit">
    <text evidence="1">Part of the 50S ribosomal subunit.</text>
</comment>
<comment type="similarity">
    <text evidence="1">Belongs to the bacterial ribosomal protein bL31 family. Type A subfamily.</text>
</comment>
<comment type="sequence caution" evidence="2">
    <conflict type="erroneous initiation">
        <sequence resource="EMBL-CDS" id="ABF14199"/>
    </conflict>
</comment>
<protein>
    <recommendedName>
        <fullName evidence="1">Large ribosomal subunit protein bL31</fullName>
    </recommendedName>
    <alternativeName>
        <fullName evidence="2">50S ribosomal protein L31</fullName>
    </alternativeName>
</protein>
<feature type="chain" id="PRO_0000259169" description="Large ribosomal subunit protein bL31">
    <location>
        <begin position="1"/>
        <end position="75"/>
    </location>
</feature>
<feature type="binding site" evidence="1">
    <location>
        <position position="16"/>
    </location>
    <ligand>
        <name>Zn(2+)</name>
        <dbReference type="ChEBI" id="CHEBI:29105"/>
    </ligand>
</feature>
<feature type="binding site" evidence="1">
    <location>
        <position position="18"/>
    </location>
    <ligand>
        <name>Zn(2+)</name>
        <dbReference type="ChEBI" id="CHEBI:29105"/>
    </ligand>
</feature>
<feature type="binding site" evidence="1">
    <location>
        <position position="37"/>
    </location>
    <ligand>
        <name>Zn(2+)</name>
        <dbReference type="ChEBI" id="CHEBI:29105"/>
    </ligand>
</feature>
<feature type="binding site" evidence="1">
    <location>
        <position position="40"/>
    </location>
    <ligand>
        <name>Zn(2+)</name>
        <dbReference type="ChEBI" id="CHEBI:29105"/>
    </ligand>
</feature>
<name>RL31_BAUCH</name>
<sequence length="75" mass="8820">MQKNIHPKYFEIRAICSCGNIIPTYSTLDQHLNLDVCSACHPFYTGKQRRVNTRGRVERFNKRFSLSIMNSKKKE</sequence>
<organism>
    <name type="scientific">Baumannia cicadellinicola subsp. Homalodisca coagulata</name>
    <dbReference type="NCBI Taxonomy" id="374463"/>
    <lineage>
        <taxon>Bacteria</taxon>
        <taxon>Pseudomonadati</taxon>
        <taxon>Pseudomonadota</taxon>
        <taxon>Gammaproteobacteria</taxon>
        <taxon>Candidatus Palibaumannia</taxon>
    </lineage>
</organism>
<dbReference type="EMBL" id="CP000238">
    <property type="protein sequence ID" value="ABF14199.1"/>
    <property type="status" value="ALT_INIT"/>
    <property type="molecule type" value="Genomic_DNA"/>
</dbReference>
<dbReference type="RefSeq" id="WP_041574882.1">
    <property type="nucleotide sequence ID" value="NC_007984.1"/>
</dbReference>
<dbReference type="SMR" id="Q1LTT8"/>
<dbReference type="STRING" id="374463.BCI_0165"/>
<dbReference type="KEGG" id="bci:BCI_0165"/>
<dbReference type="HOGENOM" id="CLU_114306_4_2_6"/>
<dbReference type="OrthoDB" id="9803251at2"/>
<dbReference type="Proteomes" id="UP000002427">
    <property type="component" value="Chromosome"/>
</dbReference>
<dbReference type="GO" id="GO:1990904">
    <property type="term" value="C:ribonucleoprotein complex"/>
    <property type="evidence" value="ECO:0007669"/>
    <property type="project" value="UniProtKB-KW"/>
</dbReference>
<dbReference type="GO" id="GO:0005840">
    <property type="term" value="C:ribosome"/>
    <property type="evidence" value="ECO:0007669"/>
    <property type="project" value="UniProtKB-KW"/>
</dbReference>
<dbReference type="GO" id="GO:0046872">
    <property type="term" value="F:metal ion binding"/>
    <property type="evidence" value="ECO:0007669"/>
    <property type="project" value="UniProtKB-KW"/>
</dbReference>
<dbReference type="GO" id="GO:0019843">
    <property type="term" value="F:rRNA binding"/>
    <property type="evidence" value="ECO:0007669"/>
    <property type="project" value="UniProtKB-KW"/>
</dbReference>
<dbReference type="GO" id="GO:0003735">
    <property type="term" value="F:structural constituent of ribosome"/>
    <property type="evidence" value="ECO:0007669"/>
    <property type="project" value="InterPro"/>
</dbReference>
<dbReference type="GO" id="GO:0006412">
    <property type="term" value="P:translation"/>
    <property type="evidence" value="ECO:0007669"/>
    <property type="project" value="UniProtKB-UniRule"/>
</dbReference>
<dbReference type="Gene3D" id="4.10.830.30">
    <property type="entry name" value="Ribosomal protein L31"/>
    <property type="match status" value="1"/>
</dbReference>
<dbReference type="HAMAP" id="MF_00501">
    <property type="entry name" value="Ribosomal_bL31_1"/>
    <property type="match status" value="1"/>
</dbReference>
<dbReference type="InterPro" id="IPR034704">
    <property type="entry name" value="Ribosomal_bL28/bL31-like_sf"/>
</dbReference>
<dbReference type="InterPro" id="IPR002150">
    <property type="entry name" value="Ribosomal_bL31"/>
</dbReference>
<dbReference type="InterPro" id="IPR027491">
    <property type="entry name" value="Ribosomal_bL31_A"/>
</dbReference>
<dbReference type="InterPro" id="IPR042105">
    <property type="entry name" value="Ribosomal_bL31_sf"/>
</dbReference>
<dbReference type="NCBIfam" id="TIGR00105">
    <property type="entry name" value="L31"/>
    <property type="match status" value="1"/>
</dbReference>
<dbReference type="NCBIfam" id="NF000612">
    <property type="entry name" value="PRK00019.1"/>
    <property type="match status" value="1"/>
</dbReference>
<dbReference type="PANTHER" id="PTHR33280">
    <property type="entry name" value="50S RIBOSOMAL PROTEIN L31, CHLOROPLASTIC"/>
    <property type="match status" value="1"/>
</dbReference>
<dbReference type="PANTHER" id="PTHR33280:SF6">
    <property type="entry name" value="LARGE RIBOSOMAL SUBUNIT PROTEIN BL31A"/>
    <property type="match status" value="1"/>
</dbReference>
<dbReference type="Pfam" id="PF01197">
    <property type="entry name" value="Ribosomal_L31"/>
    <property type="match status" value="1"/>
</dbReference>
<dbReference type="PRINTS" id="PR01249">
    <property type="entry name" value="RIBOSOMALL31"/>
</dbReference>
<dbReference type="SUPFAM" id="SSF143800">
    <property type="entry name" value="L28p-like"/>
    <property type="match status" value="1"/>
</dbReference>
<dbReference type="PROSITE" id="PS01143">
    <property type="entry name" value="RIBOSOMAL_L31"/>
    <property type="match status" value="1"/>
</dbReference>
<proteinExistence type="inferred from homology"/>
<gene>
    <name evidence="1" type="primary">rpmE</name>
    <name type="ordered locus">BCI_0165</name>
</gene>